<accession>Q8YK28</accession>
<comment type="function">
    <text evidence="1">Part of the ABC transporter complex PhnCDE involved in phosphonates import. Responsible for energy coupling to the transport system.</text>
</comment>
<comment type="catalytic activity">
    <reaction evidence="1">
        <text>phosphonate(out) + ATP + H2O = phosphonate(in) + ADP + phosphate + H(+)</text>
        <dbReference type="Rhea" id="RHEA:18065"/>
        <dbReference type="ChEBI" id="CHEBI:15377"/>
        <dbReference type="ChEBI" id="CHEBI:15378"/>
        <dbReference type="ChEBI" id="CHEBI:16215"/>
        <dbReference type="ChEBI" id="CHEBI:30616"/>
        <dbReference type="ChEBI" id="CHEBI:43474"/>
        <dbReference type="ChEBI" id="CHEBI:456216"/>
        <dbReference type="EC" id="7.3.2.2"/>
    </reaction>
</comment>
<comment type="subunit">
    <text evidence="1">The complex is composed of two ATP-binding proteins (PhnC), two transmembrane proteins (PhnE) and a solute-binding protein (PhnD).</text>
</comment>
<comment type="subcellular location">
    <subcellularLocation>
        <location evidence="1">Cell inner membrane</location>
        <topology evidence="1">Peripheral membrane protein</topology>
    </subcellularLocation>
</comment>
<comment type="similarity">
    <text evidence="1">Belongs to the ABC transporter superfamily. Phosphonates importer (TC 3.A.1.9.1) family.</text>
</comment>
<name>PHNC3_NOSS1</name>
<sequence>MMIQLECLSVTYPGGVQALQAVSLNFNPGEFTVILGASGSGKSTLLRCLNGLIQPTAGTITIEGYRQINDPKVLHQHRQRTGMIFQQHQLIARQTALQNVLTGRLAYHSTVRSFFPLPKADKYIALECLDRVGLLSKALARVDNLSGGQQQRVGIARALAQQPRLMLADEPVASLDPASSHKVISFLRQICQEDGIAAIMSLHQVDLAKAYADRIVGISQGRIVFDGSAADIEECELNRIYGNAENIHFDDIPSNQYPIASN</sequence>
<protein>
    <recommendedName>
        <fullName evidence="1">Phosphonates import ATP-binding protein PhnC 3</fullName>
        <ecNumber evidence="1">7.3.2.2</ecNumber>
    </recommendedName>
</protein>
<feature type="chain" id="PRO_0000092687" description="Phosphonates import ATP-binding protein PhnC 3">
    <location>
        <begin position="1"/>
        <end position="262"/>
    </location>
</feature>
<feature type="domain" description="ABC transporter" evidence="1">
    <location>
        <begin position="3"/>
        <end position="245"/>
    </location>
</feature>
<feature type="binding site" evidence="1">
    <location>
        <begin position="36"/>
        <end position="43"/>
    </location>
    <ligand>
        <name>ATP</name>
        <dbReference type="ChEBI" id="CHEBI:30616"/>
    </ligand>
</feature>
<geneLocation type="plasmid">
    <name>pCC7120gamma</name>
</geneLocation>
<dbReference type="EC" id="7.3.2.2" evidence="1"/>
<dbReference type="EMBL" id="AP003603">
    <property type="protein sequence ID" value="BAB77420.1"/>
    <property type="molecule type" value="Genomic_DNA"/>
</dbReference>
<dbReference type="PIR" id="AC2562">
    <property type="entry name" value="AC2562"/>
</dbReference>
<dbReference type="SMR" id="Q8YK28"/>
<dbReference type="KEGG" id="ana:all8090"/>
<dbReference type="OrthoDB" id="9802264at2"/>
<dbReference type="Proteomes" id="UP000002483">
    <property type="component" value="Plasmid pCC7120gamma"/>
</dbReference>
<dbReference type="GO" id="GO:0005886">
    <property type="term" value="C:plasma membrane"/>
    <property type="evidence" value="ECO:0007669"/>
    <property type="project" value="UniProtKB-SubCell"/>
</dbReference>
<dbReference type="GO" id="GO:0015416">
    <property type="term" value="F:ABC-type phosphonate transporter activity"/>
    <property type="evidence" value="ECO:0007669"/>
    <property type="project" value="UniProtKB-EC"/>
</dbReference>
<dbReference type="GO" id="GO:0005524">
    <property type="term" value="F:ATP binding"/>
    <property type="evidence" value="ECO:0007669"/>
    <property type="project" value="UniProtKB-KW"/>
</dbReference>
<dbReference type="GO" id="GO:0016887">
    <property type="term" value="F:ATP hydrolysis activity"/>
    <property type="evidence" value="ECO:0007669"/>
    <property type="project" value="InterPro"/>
</dbReference>
<dbReference type="CDD" id="cd03256">
    <property type="entry name" value="ABC_PhnC_transporter"/>
    <property type="match status" value="1"/>
</dbReference>
<dbReference type="Gene3D" id="3.40.50.300">
    <property type="entry name" value="P-loop containing nucleotide triphosphate hydrolases"/>
    <property type="match status" value="1"/>
</dbReference>
<dbReference type="InterPro" id="IPR003593">
    <property type="entry name" value="AAA+_ATPase"/>
</dbReference>
<dbReference type="InterPro" id="IPR003439">
    <property type="entry name" value="ABC_transporter-like_ATP-bd"/>
</dbReference>
<dbReference type="InterPro" id="IPR017871">
    <property type="entry name" value="ABC_transporter-like_CS"/>
</dbReference>
<dbReference type="InterPro" id="IPR012693">
    <property type="entry name" value="ABC_transpr_PhnC"/>
</dbReference>
<dbReference type="InterPro" id="IPR050086">
    <property type="entry name" value="MetN_ABC_transporter-like"/>
</dbReference>
<dbReference type="InterPro" id="IPR027417">
    <property type="entry name" value="P-loop_NTPase"/>
</dbReference>
<dbReference type="NCBIfam" id="TIGR02315">
    <property type="entry name" value="ABC_phnC"/>
    <property type="match status" value="1"/>
</dbReference>
<dbReference type="PANTHER" id="PTHR43166">
    <property type="entry name" value="AMINO ACID IMPORT ATP-BINDING PROTEIN"/>
    <property type="match status" value="1"/>
</dbReference>
<dbReference type="PANTHER" id="PTHR43166:SF6">
    <property type="entry name" value="PHOSPHONATES IMPORT ATP-BINDING PROTEIN PHNC"/>
    <property type="match status" value="1"/>
</dbReference>
<dbReference type="Pfam" id="PF00005">
    <property type="entry name" value="ABC_tran"/>
    <property type="match status" value="1"/>
</dbReference>
<dbReference type="SMART" id="SM00382">
    <property type="entry name" value="AAA"/>
    <property type="match status" value="1"/>
</dbReference>
<dbReference type="SUPFAM" id="SSF52540">
    <property type="entry name" value="P-loop containing nucleoside triphosphate hydrolases"/>
    <property type="match status" value="1"/>
</dbReference>
<dbReference type="PROSITE" id="PS00211">
    <property type="entry name" value="ABC_TRANSPORTER_1"/>
    <property type="match status" value="1"/>
</dbReference>
<dbReference type="PROSITE" id="PS50893">
    <property type="entry name" value="ABC_TRANSPORTER_2"/>
    <property type="match status" value="1"/>
</dbReference>
<dbReference type="PROSITE" id="PS51249">
    <property type="entry name" value="PHNC"/>
    <property type="match status" value="1"/>
</dbReference>
<organism>
    <name type="scientific">Nostoc sp. (strain PCC 7120 / SAG 25.82 / UTEX 2576)</name>
    <dbReference type="NCBI Taxonomy" id="103690"/>
    <lineage>
        <taxon>Bacteria</taxon>
        <taxon>Bacillati</taxon>
        <taxon>Cyanobacteriota</taxon>
        <taxon>Cyanophyceae</taxon>
        <taxon>Nostocales</taxon>
        <taxon>Nostocaceae</taxon>
        <taxon>Nostoc</taxon>
    </lineage>
</organism>
<reference key="1">
    <citation type="journal article" date="2001" name="DNA Res.">
        <title>Complete genomic sequence of the filamentous nitrogen-fixing cyanobacterium Anabaena sp. strain PCC 7120.</title>
        <authorList>
            <person name="Kaneko T."/>
            <person name="Nakamura Y."/>
            <person name="Wolk C.P."/>
            <person name="Kuritz T."/>
            <person name="Sasamoto S."/>
            <person name="Watanabe A."/>
            <person name="Iriguchi M."/>
            <person name="Ishikawa A."/>
            <person name="Kawashima K."/>
            <person name="Kimura T."/>
            <person name="Kishida Y."/>
            <person name="Kohara M."/>
            <person name="Matsumoto M."/>
            <person name="Matsuno A."/>
            <person name="Muraki A."/>
            <person name="Nakazaki N."/>
            <person name="Shimpo S."/>
            <person name="Sugimoto M."/>
            <person name="Takazawa M."/>
            <person name="Yamada M."/>
            <person name="Yasuda M."/>
            <person name="Tabata S."/>
        </authorList>
    </citation>
    <scope>NUCLEOTIDE SEQUENCE [LARGE SCALE GENOMIC DNA]</scope>
    <source>
        <strain>PCC 7120 / SAG 25.82 / UTEX 2576</strain>
    </source>
</reference>
<evidence type="ECO:0000255" key="1">
    <source>
        <dbReference type="HAMAP-Rule" id="MF_01713"/>
    </source>
</evidence>
<proteinExistence type="inferred from homology"/>
<gene>
    <name evidence="1" type="primary">phnC3</name>
    <name type="ordered locus">all8090</name>
</gene>
<keyword id="KW-0067">ATP-binding</keyword>
<keyword id="KW-0997">Cell inner membrane</keyword>
<keyword id="KW-1003">Cell membrane</keyword>
<keyword id="KW-0472">Membrane</keyword>
<keyword id="KW-0547">Nucleotide-binding</keyword>
<keyword id="KW-0918">Phosphonate transport</keyword>
<keyword id="KW-0614">Plasmid</keyword>
<keyword id="KW-1185">Reference proteome</keyword>
<keyword id="KW-1278">Translocase</keyword>
<keyword id="KW-0813">Transport</keyword>